<accession>Q9LXW7</accession>
<evidence type="ECO:0000250" key="1"/>
<evidence type="ECO:0000255" key="2">
    <source>
        <dbReference type="PROSITE-ProRule" id="PRU00142"/>
    </source>
</evidence>
<evidence type="ECO:0000255" key="3">
    <source>
        <dbReference type="PROSITE-ProRule" id="PRU00177"/>
    </source>
</evidence>
<evidence type="ECO:0000255" key="4">
    <source>
        <dbReference type="PROSITE-ProRule" id="PRU00541"/>
    </source>
</evidence>
<evidence type="ECO:0000255" key="5">
    <source>
        <dbReference type="PROSITE-ProRule" id="PRU00542"/>
    </source>
</evidence>
<evidence type="ECO:0000256" key="6">
    <source>
        <dbReference type="SAM" id="MobiDB-lite"/>
    </source>
</evidence>
<evidence type="ECO:0000269" key="7">
    <source>
    </source>
</evidence>
<evidence type="ECO:0000269" key="8">
    <source>
    </source>
</evidence>
<evidence type="ECO:0000269" key="9">
    <source>
    </source>
</evidence>
<evidence type="ECO:0000269" key="10">
    <source>
    </source>
</evidence>
<evidence type="ECO:0000269" key="11">
    <source>
    </source>
</evidence>
<evidence type="ECO:0000269" key="12">
    <source>
    </source>
</evidence>
<evidence type="ECO:0000269" key="13">
    <source>
    </source>
</evidence>
<evidence type="ECO:0000269" key="14">
    <source>
    </source>
</evidence>
<evidence type="ECO:0000303" key="15">
    <source>
    </source>
</evidence>
<evidence type="ECO:0000305" key="16"/>
<evidence type="ECO:0007829" key="17">
    <source>
        <dbReference type="PDB" id="7VG2"/>
    </source>
</evidence>
<gene>
    <name type="primary">DCL3</name>
    <name type="ordered locus">At3g43920</name>
    <name type="ORF">T15B3.60</name>
</gene>
<keyword id="KW-0002">3D-structure</keyword>
<keyword id="KW-0025">Alternative splicing</keyword>
<keyword id="KW-0067">ATP-binding</keyword>
<keyword id="KW-0255">Endonuclease</keyword>
<keyword id="KW-0347">Helicase</keyword>
<keyword id="KW-0378">Hydrolase</keyword>
<keyword id="KW-0460">Magnesium</keyword>
<keyword id="KW-0464">Manganese</keyword>
<keyword id="KW-0479">Metal-binding</keyword>
<keyword id="KW-0540">Nuclease</keyword>
<keyword id="KW-0547">Nucleotide-binding</keyword>
<keyword id="KW-0539">Nucleus</keyword>
<keyword id="KW-0611">Plant defense</keyword>
<keyword id="KW-1185">Reference proteome</keyword>
<keyword id="KW-0677">Repeat</keyword>
<keyword id="KW-0694">RNA-binding</keyword>
<keyword id="KW-0943">RNA-mediated gene silencing</keyword>
<organism>
    <name type="scientific">Arabidopsis thaliana</name>
    <name type="common">Mouse-ear cress</name>
    <dbReference type="NCBI Taxonomy" id="3702"/>
    <lineage>
        <taxon>Eukaryota</taxon>
        <taxon>Viridiplantae</taxon>
        <taxon>Streptophyta</taxon>
        <taxon>Embryophyta</taxon>
        <taxon>Tracheophyta</taxon>
        <taxon>Spermatophyta</taxon>
        <taxon>Magnoliopsida</taxon>
        <taxon>eudicotyledons</taxon>
        <taxon>Gunneridae</taxon>
        <taxon>Pentapetalae</taxon>
        <taxon>rosids</taxon>
        <taxon>malvids</taxon>
        <taxon>Brassicales</taxon>
        <taxon>Brassicaceae</taxon>
        <taxon>Camelineae</taxon>
        <taxon>Arabidopsis</taxon>
    </lineage>
</organism>
<sequence>MHSSLEPEKMEEGGGSNSLKRKFSEIDGDQNLDSVSSPMMTDSNGSYELKVYEVAKNRNIIAVLGTGIDKSEITKRLIKAMGSSDTDKRLIIFLAPTVNLVKQQCCEIRALVNLKVEEYFGAKGVDKWTSQRWDEEFSKHDVLVMTPQILLDVLRSAFLKLEMVCLLIIDECHHTTGNHPYAKLMKEFYHESTSKPKIFGLTASAVIRKGIVSSPSNYAAQVSELERLMDSKIFNPEEREGVEKFATTVKEGPILYNPSPSCSLELKEKLETSHLKFDASLRRLQELGKDSFLNMDNKFETYQKRLSIDYREILHCLDNLGLICAHLAAEVCLEKISDTKEESETYKECSMVCKEFLEDILSTIGVYLPQDDKSLVDLQQNHLSAVISGHVSPKLKELFHLLDSFRGDKQKQCLILVERIITAKVIERFVKKEASLAYLNVLYLTENNPSTNVSAQKMQIEIPDLFQHGKVNLLFITDVVEEGFQVPDCSCMVCFDLPKTMCSYSQSQKHAKQSNSKSIMFLERGNPKQRDHLHDLMRREVLIQDPEAPNLKSCPPPVKNGHGVKEIGSMVIPDSNITVSEEAASTQTMSDPPSRNEQLPPCKKLRLDNNLLQSNGKEKVASSKSKSSSSAAGSKKRKELHGTTCANALSGTWGENIDGATFQAYKFDFCCNISGEVYSSFSLLLESTLAEDVGKVEMDLYLVRKLVKASVSPCGQIRLSQEELVKAKYFQQFFFNGMFGKLFVGSKSQGTKREFLLQTDTSSLWHPAFMFLLLPVETNDLASSATIDWSAINSCASIVEFLKKNSLLDLRDSDGNQCNTSSGQEVLLDDKMEETNLIHFANASSDKNSLEELVVIAIHTGRIYSIVEAVSDSSAMSPFEVDASSGYATYAEYFNKKYGIVLAHPNQPLMKLKQSHHAHNLLVDFNEEMVVKTEPKAGNVRKRKPNIHAHLPPELLARIDVPRAVLKSIYLLPSVMHRLESLMLASQLREEIDCSIDNFSISSTSILEAVTTLTCPESFSMERLELLGDSVLKYVASCHLFLKYPDKDEGQLSRQRQSIISNSNLHRLTTSRKLQGYIRNGAFEPRRWTAPGQFSLFPVPCKCGIDTREVPLDPKFFTENMTIKIGKSCDMGHRWVVSKSVSDCAEALIGAYYVSGGLSASLHMMKWLGIDVDFDPNLVVEAINRVSLRCYIPKEDELIELERKIQHEFSAKFLLKEAITHSSLRESYSYERLEFLGDSVLDFLITRHLFNTYEQTGPGEMTDLRSACVNNENFAQVAVKNNLHTHLQRCATVLETQINDYLMSFQKPDETGRSIPSIQGPKALGDVVESIAGALLIDTRLDLDQVWRVFEPLLSPLVTPDKLQLPPYRELNELCDSLGYFFRVKCSNDGVKAQATIQLQLDDVLLTGDGSEQTNKLALGKAASHLLTQLEKRNISRKTSLGDNQSSMDVNLACNHSDRETLTSETTEIQSIVIPFIGPINMKKGGPRGTLHEFCKKHLWPMPTFDTSEEKSRTPFEFIDGGEKRTSFSSFTSTITLRIPNREAVMYAGEARPDKKSSFDSAVVELLYELERRKIVIIQK</sequence>
<proteinExistence type="evidence at protein level"/>
<protein>
    <recommendedName>
        <fullName>Endoribonuclease Dicer homolog 3</fullName>
        <ecNumber>3.1.26.-</ecNumber>
    </recommendedName>
    <alternativeName>
        <fullName>Dicer-like protein 3</fullName>
        <shortName>AtDCL3</shortName>
    </alternativeName>
</protein>
<feature type="chain" id="PRO_0000404661" description="Endoribonuclease Dicer homolog 3">
    <location>
        <begin position="1"/>
        <end position="1580"/>
    </location>
</feature>
<feature type="domain" description="Helicase ATP-binding" evidence="4">
    <location>
        <begin position="51"/>
        <end position="223"/>
    </location>
</feature>
<feature type="domain" description="Helicase C-terminal" evidence="5">
    <location>
        <begin position="394"/>
        <end position="562"/>
    </location>
</feature>
<feature type="domain" description="PAZ" evidence="2">
    <location>
        <begin position="836"/>
        <end position="960"/>
    </location>
</feature>
<feature type="domain" description="RNase III 1" evidence="3">
    <location>
        <begin position="985"/>
        <end position="1157"/>
    </location>
</feature>
<feature type="domain" description="RNase III 2" evidence="3">
    <location>
        <begin position="1198"/>
        <end position="1340"/>
    </location>
</feature>
<feature type="region of interest" description="Disordered" evidence="6">
    <location>
        <begin position="1"/>
        <end position="22"/>
    </location>
</feature>
<feature type="region of interest" description="Disordered" evidence="6">
    <location>
        <begin position="581"/>
        <end position="601"/>
    </location>
</feature>
<feature type="region of interest" description="Disordered" evidence="6">
    <location>
        <begin position="613"/>
        <end position="638"/>
    </location>
</feature>
<feature type="short sequence motif" description="DECH box">
    <location>
        <begin position="170"/>
        <end position="173"/>
    </location>
</feature>
<feature type="compositionally biased region" description="Basic and acidic residues" evidence="6">
    <location>
        <begin position="1"/>
        <end position="12"/>
    </location>
</feature>
<feature type="compositionally biased region" description="Polar residues" evidence="6">
    <location>
        <begin position="581"/>
        <end position="597"/>
    </location>
</feature>
<feature type="compositionally biased region" description="Low complexity" evidence="6">
    <location>
        <begin position="622"/>
        <end position="633"/>
    </location>
</feature>
<feature type="binding site" evidence="4">
    <location>
        <begin position="64"/>
        <end position="71"/>
    </location>
    <ligand>
        <name>ATP</name>
        <dbReference type="ChEBI" id="CHEBI:30616"/>
    </ligand>
</feature>
<feature type="binding site" evidence="1">
    <location>
        <position position="1234"/>
    </location>
    <ligand>
        <name>Mg(2+)</name>
        <dbReference type="ChEBI" id="CHEBI:18420"/>
    </ligand>
</feature>
<feature type="binding site" evidence="1">
    <location>
        <position position="1326"/>
    </location>
    <ligand>
        <name>Mg(2+)</name>
        <dbReference type="ChEBI" id="CHEBI:18420"/>
    </ligand>
</feature>
<feature type="binding site" evidence="1">
    <location>
        <position position="1329"/>
    </location>
    <ligand>
        <name>Mg(2+)</name>
        <dbReference type="ChEBI" id="CHEBI:18420"/>
    </ligand>
</feature>
<feature type="site" description="Important for activity" evidence="1">
    <location>
        <position position="1322"/>
    </location>
</feature>
<feature type="splice variant" id="VSP_040616" description="In isoform 2." evidence="15">
    <location>
        <begin position="101"/>
        <end position="103"/>
    </location>
</feature>
<feature type="splice variant" id="VSP_040617" description="In isoform 2." evidence="15">
    <location>
        <begin position="186"/>
        <end position="231"/>
    </location>
</feature>
<feature type="strand" evidence="17">
    <location>
        <begin position="638"/>
        <end position="641"/>
    </location>
</feature>
<feature type="strand" evidence="17">
    <location>
        <begin position="647"/>
        <end position="649"/>
    </location>
</feature>
<feature type="strand" evidence="17">
    <location>
        <begin position="661"/>
        <end position="675"/>
    </location>
</feature>
<feature type="strand" evidence="17">
    <location>
        <begin position="681"/>
        <end position="687"/>
    </location>
</feature>
<feature type="strand" evidence="17">
    <location>
        <begin position="691"/>
        <end position="695"/>
    </location>
</feature>
<feature type="strand" evidence="17">
    <location>
        <begin position="697"/>
        <end position="701"/>
    </location>
</feature>
<feature type="strand" evidence="17">
    <location>
        <begin position="706"/>
        <end position="718"/>
    </location>
</feature>
<feature type="helix" evidence="17">
    <location>
        <begin position="721"/>
        <end position="738"/>
    </location>
</feature>
<feature type="turn" evidence="17">
    <location>
        <begin position="756"/>
        <end position="758"/>
    </location>
</feature>
<feature type="strand" evidence="17">
    <location>
        <begin position="762"/>
        <end position="765"/>
    </location>
</feature>
<feature type="helix" evidence="17">
    <location>
        <begin position="789"/>
        <end position="804"/>
    </location>
</feature>
<feature type="strand" evidence="17">
    <location>
        <begin position="854"/>
        <end position="860"/>
    </location>
</feature>
<feature type="strand" evidence="17">
    <location>
        <begin position="863"/>
        <end position="869"/>
    </location>
</feature>
<feature type="helix" evidence="17">
    <location>
        <begin position="890"/>
        <end position="897"/>
    </location>
</feature>
<feature type="strand" evidence="17">
    <location>
        <begin position="910"/>
        <end position="914"/>
    </location>
</feature>
<feature type="strand" evidence="17">
    <location>
        <begin position="948"/>
        <end position="951"/>
    </location>
</feature>
<feature type="helix" evidence="17">
    <location>
        <begin position="953"/>
        <end position="955"/>
    </location>
</feature>
<feature type="strand" evidence="17">
    <location>
        <begin position="956"/>
        <end position="958"/>
    </location>
</feature>
<feature type="helix" evidence="17">
    <location>
        <begin position="963"/>
        <end position="969"/>
    </location>
</feature>
<feature type="helix" evidence="17">
    <location>
        <begin position="972"/>
        <end position="992"/>
    </location>
</feature>
<feature type="helix" evidence="17">
    <location>
        <begin position="1003"/>
        <end position="1009"/>
    </location>
</feature>
<feature type="helix" evidence="17">
    <location>
        <begin position="1022"/>
        <end position="1043"/>
    </location>
</feature>
<feature type="helix" evidence="17">
    <location>
        <begin position="1049"/>
        <end position="1059"/>
    </location>
</feature>
<feature type="helix" evidence="17">
    <location>
        <begin position="1062"/>
        <end position="1070"/>
    </location>
</feature>
<feature type="turn" evidence="17">
    <location>
        <begin position="1071"/>
        <end position="1073"/>
    </location>
</feature>
<feature type="turn" evidence="17">
    <location>
        <begin position="1085"/>
        <end position="1087"/>
    </location>
</feature>
<feature type="strand" evidence="17">
    <location>
        <begin position="1107"/>
        <end position="1109"/>
    </location>
</feature>
<feature type="strand" evidence="17">
    <location>
        <begin position="1116"/>
        <end position="1118"/>
    </location>
</feature>
<feature type="strand" evidence="17">
    <location>
        <begin position="1134"/>
        <end position="1136"/>
    </location>
</feature>
<feature type="helix" evidence="17">
    <location>
        <begin position="1139"/>
        <end position="1168"/>
    </location>
</feature>
<feature type="helix" evidence="17">
    <location>
        <begin position="1176"/>
        <end position="1183"/>
    </location>
</feature>
<feature type="turn" evidence="17">
    <location>
        <begin position="1184"/>
        <end position="1186"/>
    </location>
</feature>
<feature type="strand" evidence="17">
    <location>
        <begin position="1187"/>
        <end position="1189"/>
    </location>
</feature>
<feature type="helix" evidence="17">
    <location>
        <begin position="1197"/>
        <end position="1205"/>
    </location>
</feature>
<feature type="strand" evidence="17">
    <location>
        <begin position="1210"/>
        <end position="1212"/>
    </location>
</feature>
<feature type="helix" evidence="17">
    <location>
        <begin position="1213"/>
        <end position="1219"/>
    </location>
</feature>
<feature type="helix" evidence="17">
    <location>
        <begin position="1222"/>
        <end position="1224"/>
    </location>
</feature>
<feature type="helix" evidence="17">
    <location>
        <begin position="1231"/>
        <end position="1252"/>
    </location>
</feature>
<feature type="turn" evidence="17">
    <location>
        <begin position="1258"/>
        <end position="1260"/>
    </location>
</feature>
<feature type="helix" evidence="17">
    <location>
        <begin position="1261"/>
        <end position="1268"/>
    </location>
</feature>
<feature type="helix" evidence="17">
    <location>
        <begin position="1271"/>
        <end position="1280"/>
    </location>
</feature>
<feature type="helix" evidence="17">
    <location>
        <begin position="1283"/>
        <end position="1285"/>
    </location>
</feature>
<feature type="helix" evidence="17">
    <location>
        <begin position="1292"/>
        <end position="1303"/>
    </location>
</feature>
<feature type="strand" evidence="17">
    <location>
        <begin position="1309"/>
        <end position="1312"/>
    </location>
</feature>
<feature type="helix" evidence="17">
    <location>
        <begin position="1322"/>
        <end position="1338"/>
    </location>
</feature>
<feature type="turn" evidence="17">
    <location>
        <begin position="1339"/>
        <end position="1341"/>
    </location>
</feature>
<feature type="helix" evidence="17">
    <location>
        <begin position="1343"/>
        <end position="1350"/>
    </location>
</feature>
<feature type="turn" evidence="17">
    <location>
        <begin position="1351"/>
        <end position="1354"/>
    </location>
</feature>
<feature type="turn" evidence="17">
    <location>
        <begin position="1360"/>
        <end position="1362"/>
    </location>
</feature>
<feature type="helix" evidence="17">
    <location>
        <begin position="1367"/>
        <end position="1378"/>
    </location>
</feature>
<feature type="strand" evidence="17">
    <location>
        <begin position="1382"/>
        <end position="1387"/>
    </location>
</feature>
<feature type="strand" evidence="17">
    <location>
        <begin position="1390"/>
        <end position="1400"/>
    </location>
</feature>
<feature type="strand" evidence="17">
    <location>
        <begin position="1405"/>
        <end position="1415"/>
    </location>
</feature>
<feature type="helix" evidence="17">
    <location>
        <begin position="1416"/>
        <end position="1431"/>
    </location>
</feature>
<feature type="strand" evidence="17">
    <location>
        <begin position="1483"/>
        <end position="1485"/>
    </location>
</feature>
<feature type="helix" evidence="17">
    <location>
        <begin position="1486"/>
        <end position="1497"/>
    </location>
</feature>
<feature type="strand" evidence="17">
    <location>
        <begin position="1504"/>
        <end position="1506"/>
    </location>
</feature>
<feature type="strand" evidence="17">
    <location>
        <begin position="1534"/>
        <end position="1537"/>
    </location>
</feature>
<feature type="strand" evidence="17">
    <location>
        <begin position="1552"/>
        <end position="1554"/>
    </location>
</feature>
<feature type="helix" evidence="17">
    <location>
        <begin position="1555"/>
        <end position="1572"/>
    </location>
</feature>
<dbReference type="EC" id="3.1.26.-"/>
<dbReference type="EMBL" id="DQ479972">
    <property type="protein sequence ID" value="ABF19799.1"/>
    <property type="molecule type" value="mRNA"/>
</dbReference>
<dbReference type="EMBL" id="AL163975">
    <property type="protein sequence ID" value="CAB88120.1"/>
    <property type="molecule type" value="Genomic_DNA"/>
</dbReference>
<dbReference type="EMBL" id="CP002686">
    <property type="protein sequence ID" value="AEE77842.1"/>
    <property type="molecule type" value="Genomic_DNA"/>
</dbReference>
<dbReference type="EMBL" id="CP002686">
    <property type="protein sequence ID" value="AEE77843.1"/>
    <property type="molecule type" value="Genomic_DNA"/>
</dbReference>
<dbReference type="PIR" id="T48946">
    <property type="entry name" value="T48946"/>
</dbReference>
<dbReference type="RefSeq" id="NP_001154662.2">
    <molecule id="Q9LXW7-1"/>
    <property type="nucleotide sequence ID" value="NM_001161190.2"/>
</dbReference>
<dbReference type="RefSeq" id="NP_189978.1">
    <molecule id="Q9LXW7-2"/>
    <property type="nucleotide sequence ID" value="NM_114260.1"/>
</dbReference>
<dbReference type="PDB" id="7VG2">
    <property type="method" value="EM"/>
    <property type="resolution" value="3.10 A"/>
    <property type="chains" value="A=1-1580"/>
</dbReference>
<dbReference type="PDB" id="7VG3">
    <property type="method" value="EM"/>
    <property type="resolution" value="3.73 A"/>
    <property type="chains" value="A=1-1580"/>
</dbReference>
<dbReference type="PDBsum" id="7VG2"/>
<dbReference type="PDBsum" id="7VG3"/>
<dbReference type="SMR" id="Q9LXW7"/>
<dbReference type="BioGRID" id="8828">
    <property type="interactions" value="5"/>
</dbReference>
<dbReference type="FunCoup" id="Q9LXW7">
    <property type="interactions" value="2293"/>
</dbReference>
<dbReference type="IntAct" id="Q9LXW7">
    <property type="interactions" value="3"/>
</dbReference>
<dbReference type="MINT" id="Q9LXW7"/>
<dbReference type="STRING" id="3702.Q9LXW7"/>
<dbReference type="PaxDb" id="3702-AT3G43920.2"/>
<dbReference type="ProteomicsDB" id="223983">
    <molecule id="Q9LXW7-1"/>
</dbReference>
<dbReference type="EnsemblPlants" id="AT3G43920.1">
    <molecule id="Q9LXW7-2"/>
    <property type="protein sequence ID" value="AT3G43920.1"/>
    <property type="gene ID" value="AT3G43920"/>
</dbReference>
<dbReference type="EnsemblPlants" id="AT3G43920.2">
    <molecule id="Q9LXW7-1"/>
    <property type="protein sequence ID" value="AT3G43920.2"/>
    <property type="gene ID" value="AT3G43920"/>
</dbReference>
<dbReference type="GeneID" id="823508"/>
<dbReference type="Gramene" id="AT3G43920.1">
    <molecule id="Q9LXW7-2"/>
    <property type="protein sequence ID" value="AT3G43920.1"/>
    <property type="gene ID" value="AT3G43920"/>
</dbReference>
<dbReference type="Gramene" id="AT3G43920.2">
    <molecule id="Q9LXW7-1"/>
    <property type="protein sequence ID" value="AT3G43920.2"/>
    <property type="gene ID" value="AT3G43920"/>
</dbReference>
<dbReference type="KEGG" id="ath:AT3G43920"/>
<dbReference type="Araport" id="AT3G43920"/>
<dbReference type="TAIR" id="AT3G43920">
    <property type="gene designation" value="DCL3"/>
</dbReference>
<dbReference type="eggNOG" id="KOG0701">
    <property type="taxonomic scope" value="Eukaryota"/>
</dbReference>
<dbReference type="InParanoid" id="Q9LXW7"/>
<dbReference type="PhylomeDB" id="Q9LXW7"/>
<dbReference type="PRO" id="PR:Q9LXW7"/>
<dbReference type="Proteomes" id="UP000006548">
    <property type="component" value="Chromosome 3"/>
</dbReference>
<dbReference type="ExpressionAtlas" id="Q9LXW7">
    <property type="expression patterns" value="baseline and differential"/>
</dbReference>
<dbReference type="GO" id="GO:0005730">
    <property type="term" value="C:nucleolus"/>
    <property type="evidence" value="ECO:0000314"/>
    <property type="project" value="TAIR"/>
</dbReference>
<dbReference type="GO" id="GO:0005634">
    <property type="term" value="C:nucleus"/>
    <property type="evidence" value="ECO:0000314"/>
    <property type="project" value="TAIR"/>
</dbReference>
<dbReference type="GO" id="GO:0005524">
    <property type="term" value="F:ATP binding"/>
    <property type="evidence" value="ECO:0007669"/>
    <property type="project" value="UniProtKB-KW"/>
</dbReference>
<dbReference type="GO" id="GO:0003725">
    <property type="term" value="F:double-stranded RNA binding"/>
    <property type="evidence" value="ECO:0000314"/>
    <property type="project" value="TAIR"/>
</dbReference>
<dbReference type="GO" id="GO:0004386">
    <property type="term" value="F:helicase activity"/>
    <property type="evidence" value="ECO:0007669"/>
    <property type="project" value="UniProtKB-KW"/>
</dbReference>
<dbReference type="GO" id="GO:0046872">
    <property type="term" value="F:metal ion binding"/>
    <property type="evidence" value="ECO:0007669"/>
    <property type="project" value="UniProtKB-KW"/>
</dbReference>
<dbReference type="GO" id="GO:0004525">
    <property type="term" value="F:ribonuclease III activity"/>
    <property type="evidence" value="ECO:0007669"/>
    <property type="project" value="InterPro"/>
</dbReference>
<dbReference type="GO" id="GO:0051607">
    <property type="term" value="P:defense response to virus"/>
    <property type="evidence" value="ECO:0000315"/>
    <property type="project" value="TAIR"/>
</dbReference>
<dbReference type="GO" id="GO:0051214">
    <property type="term" value="P:RNAi-mediated antiviral immunity against RNA virus"/>
    <property type="evidence" value="ECO:0000316"/>
    <property type="project" value="TAIR"/>
</dbReference>
<dbReference type="GO" id="GO:0030422">
    <property type="term" value="P:siRNA processing"/>
    <property type="evidence" value="ECO:0000315"/>
    <property type="project" value="TAIR"/>
</dbReference>
<dbReference type="GO" id="GO:0010267">
    <property type="term" value="P:ta-siRNA processing"/>
    <property type="evidence" value="ECO:0000315"/>
    <property type="project" value="TAIR"/>
</dbReference>
<dbReference type="CDD" id="cd18034">
    <property type="entry name" value="DEXHc_dicer"/>
    <property type="match status" value="1"/>
</dbReference>
<dbReference type="CDD" id="cd02844">
    <property type="entry name" value="PAZ_CAF_like"/>
    <property type="match status" value="1"/>
</dbReference>
<dbReference type="CDD" id="cd00593">
    <property type="entry name" value="RIBOc"/>
    <property type="match status" value="2"/>
</dbReference>
<dbReference type="CDD" id="cd18802">
    <property type="entry name" value="SF2_C_dicer"/>
    <property type="match status" value="1"/>
</dbReference>
<dbReference type="FunFam" id="1.10.1520.10:FF:000008">
    <property type="entry name" value="Dicer-like 104"/>
    <property type="match status" value="1"/>
</dbReference>
<dbReference type="FunFam" id="2.170.260.10:FF:000004">
    <property type="entry name" value="Dicer-like 104"/>
    <property type="match status" value="1"/>
</dbReference>
<dbReference type="FunFam" id="3.30.160.20:FF:000038">
    <property type="entry name" value="Dicer-like 104"/>
    <property type="match status" value="1"/>
</dbReference>
<dbReference type="FunFam" id="1.10.1520.10:FF:000004">
    <property type="entry name" value="Endoribonuclease dicer-like 1"/>
    <property type="match status" value="1"/>
</dbReference>
<dbReference type="Gene3D" id="3.30.160.20">
    <property type="match status" value="1"/>
</dbReference>
<dbReference type="Gene3D" id="3.40.50.300">
    <property type="entry name" value="P-loop containing nucleotide triphosphate hydrolases"/>
    <property type="match status" value="2"/>
</dbReference>
<dbReference type="Gene3D" id="2.170.260.10">
    <property type="entry name" value="paz domain"/>
    <property type="match status" value="1"/>
</dbReference>
<dbReference type="Gene3D" id="1.10.1520.10">
    <property type="entry name" value="Ribonuclease III domain"/>
    <property type="match status" value="2"/>
</dbReference>
<dbReference type="InterPro" id="IPR011545">
    <property type="entry name" value="DEAD/DEAH_box_helicase_dom"/>
</dbReference>
<dbReference type="InterPro" id="IPR014001">
    <property type="entry name" value="Helicase_ATP-bd"/>
</dbReference>
<dbReference type="InterPro" id="IPR001650">
    <property type="entry name" value="Helicase_C-like"/>
</dbReference>
<dbReference type="InterPro" id="IPR027417">
    <property type="entry name" value="P-loop_NTPase"/>
</dbReference>
<dbReference type="InterPro" id="IPR003100">
    <property type="entry name" value="PAZ_dom"/>
</dbReference>
<dbReference type="InterPro" id="IPR036085">
    <property type="entry name" value="PAZ_dom_sf"/>
</dbReference>
<dbReference type="InterPro" id="IPR000999">
    <property type="entry name" value="RNase_III_dom"/>
</dbReference>
<dbReference type="InterPro" id="IPR036389">
    <property type="entry name" value="RNase_III_sf"/>
</dbReference>
<dbReference type="PANTHER" id="PTHR14950">
    <property type="entry name" value="DICER-RELATED"/>
    <property type="match status" value="1"/>
</dbReference>
<dbReference type="PANTHER" id="PTHR14950:SF46">
    <property type="entry name" value="ENDORIBONUCLEASE DICER HOMOLOG 3"/>
    <property type="match status" value="1"/>
</dbReference>
<dbReference type="Pfam" id="PF00270">
    <property type="entry name" value="DEAD"/>
    <property type="match status" value="1"/>
</dbReference>
<dbReference type="Pfam" id="PF00271">
    <property type="entry name" value="Helicase_C"/>
    <property type="match status" value="1"/>
</dbReference>
<dbReference type="Pfam" id="PF02170">
    <property type="entry name" value="PAZ"/>
    <property type="match status" value="1"/>
</dbReference>
<dbReference type="Pfam" id="PF00636">
    <property type="entry name" value="Ribonuclease_3"/>
    <property type="match status" value="2"/>
</dbReference>
<dbReference type="SMART" id="SM00487">
    <property type="entry name" value="DEXDc"/>
    <property type="match status" value="1"/>
</dbReference>
<dbReference type="SMART" id="SM00949">
    <property type="entry name" value="PAZ"/>
    <property type="match status" value="1"/>
</dbReference>
<dbReference type="SMART" id="SM00535">
    <property type="entry name" value="RIBOc"/>
    <property type="match status" value="2"/>
</dbReference>
<dbReference type="SUPFAM" id="SSF52540">
    <property type="entry name" value="P-loop containing nucleoside triphosphate hydrolases"/>
    <property type="match status" value="1"/>
</dbReference>
<dbReference type="SUPFAM" id="SSF101690">
    <property type="entry name" value="PAZ domain"/>
    <property type="match status" value="1"/>
</dbReference>
<dbReference type="SUPFAM" id="SSF69065">
    <property type="entry name" value="RNase III domain-like"/>
    <property type="match status" value="2"/>
</dbReference>
<dbReference type="PROSITE" id="PS51192">
    <property type="entry name" value="HELICASE_ATP_BIND_1"/>
    <property type="match status" value="1"/>
</dbReference>
<dbReference type="PROSITE" id="PS51194">
    <property type="entry name" value="HELICASE_CTER"/>
    <property type="match status" value="1"/>
</dbReference>
<dbReference type="PROSITE" id="PS50821">
    <property type="entry name" value="PAZ"/>
    <property type="match status" value="1"/>
</dbReference>
<dbReference type="PROSITE" id="PS00517">
    <property type="entry name" value="RNASE_3_1"/>
    <property type="match status" value="1"/>
</dbReference>
<dbReference type="PROSITE" id="PS50142">
    <property type="entry name" value="RNASE_3_2"/>
    <property type="match status" value="2"/>
</dbReference>
<comment type="function">
    <text evidence="9 10 12 13 14">Ribonuclease (RNase) III involved in RNA-mediated post-transcriptional gene silencing (PTGS). Involved in the processing of repeat-associated small interfering RNAs (ra-siRNAs, derived from heterochromatin and DNA repeats such as transposons) by cleaving small dsRNAs into 24 nucleotide ra-siRNAs. Plays a role in antiviral RNA silencing. Involved in the production of viral siRNAs derived from the cabbage leaf curl virus (CaLCuV) and tobacco rattle virus (TRV). Targeted by the viral silencing suppressor (VSR) protein 2b of the cucumber mosaic virus (CMV) that inactivates DCL3 function in RNA silencing. Acts redundantly with DICER-LIKE 1 (DCL1) to promote flowering via repression of FLOWERING LOCUS C (FLC). Does not seem to be involved in microRNAs (miRNAs) processing.</text>
</comment>
<comment type="cofactor">
    <cofactor evidence="1">
        <name>Mg(2+)</name>
        <dbReference type="ChEBI" id="CHEBI:18420"/>
    </cofactor>
    <cofactor evidence="1">
        <name>Mn(2+)</name>
        <dbReference type="ChEBI" id="CHEBI:29035"/>
    </cofactor>
</comment>
<comment type="subunit">
    <text evidence="8">Interacts with DRB2 and DRB5.</text>
</comment>
<comment type="interaction">
    <interactant intactId="EBI-632737">
        <id>Q9LXW7</id>
    </interactant>
    <interactant intactId="EBI-10815073">
        <id>Q9LJF5</id>
        <label>DRB3</label>
    </interactant>
    <organismsDiffer>false</organismsDiffer>
    <experiments>2</experiments>
</comment>
<comment type="subcellular location">
    <subcellularLocation>
        <location evidence="7 11">Nucleus</location>
        <location evidence="7 11">Nucleolus</location>
    </subcellularLocation>
</comment>
<comment type="alternative products">
    <event type="alternative splicing"/>
    <isoform>
        <id>Q9LXW7-1</id>
        <name>1</name>
        <sequence type="displayed"/>
    </isoform>
    <isoform>
        <id>Q9LXW7-2</id>
        <name>2</name>
        <sequence type="described" ref="VSP_040616 VSP_040617"/>
    </isoform>
</comment>
<comment type="similarity">
    <text evidence="16">Belongs to the helicase family. Dicer subfamily.</text>
</comment>
<reference key="1">
    <citation type="journal article" date="2006" name="FEBS Lett.">
        <title>The evolution and diversification of Dicers in plants.</title>
        <authorList>
            <person name="Margis R."/>
            <person name="Fusaro A.F."/>
            <person name="Smith N.A."/>
            <person name="Curtin S.J."/>
            <person name="Watson J.M."/>
            <person name="Finnegan E.J."/>
            <person name="Waterhouse P.M."/>
        </authorList>
    </citation>
    <scope>NUCLEOTIDE SEQUENCE [MRNA] (ISOFORM 2)</scope>
</reference>
<reference key="2">
    <citation type="journal article" date="2000" name="Nature">
        <title>Sequence and analysis of chromosome 3 of the plant Arabidopsis thaliana.</title>
        <authorList>
            <person name="Salanoubat M."/>
            <person name="Lemcke K."/>
            <person name="Rieger M."/>
            <person name="Ansorge W."/>
            <person name="Unseld M."/>
            <person name="Fartmann B."/>
            <person name="Valle G."/>
            <person name="Bloecker H."/>
            <person name="Perez-Alonso M."/>
            <person name="Obermaier B."/>
            <person name="Delseny M."/>
            <person name="Boutry M."/>
            <person name="Grivell L.A."/>
            <person name="Mache R."/>
            <person name="Puigdomenech P."/>
            <person name="De Simone V."/>
            <person name="Choisne N."/>
            <person name="Artiguenave F."/>
            <person name="Robert C."/>
            <person name="Brottier P."/>
            <person name="Wincker P."/>
            <person name="Cattolico L."/>
            <person name="Weissenbach J."/>
            <person name="Saurin W."/>
            <person name="Quetier F."/>
            <person name="Schaefer M."/>
            <person name="Mueller-Auer S."/>
            <person name="Gabel C."/>
            <person name="Fuchs M."/>
            <person name="Benes V."/>
            <person name="Wurmbach E."/>
            <person name="Drzonek H."/>
            <person name="Erfle H."/>
            <person name="Jordan N."/>
            <person name="Bangert S."/>
            <person name="Wiedelmann R."/>
            <person name="Kranz H."/>
            <person name="Voss H."/>
            <person name="Holland R."/>
            <person name="Brandt P."/>
            <person name="Nyakatura G."/>
            <person name="Vezzi A."/>
            <person name="D'Angelo M."/>
            <person name="Pallavicini A."/>
            <person name="Toppo S."/>
            <person name="Simionati B."/>
            <person name="Conrad A."/>
            <person name="Hornischer K."/>
            <person name="Kauer G."/>
            <person name="Loehnert T.-H."/>
            <person name="Nordsiek G."/>
            <person name="Reichelt J."/>
            <person name="Scharfe M."/>
            <person name="Schoen O."/>
            <person name="Bargues M."/>
            <person name="Terol J."/>
            <person name="Climent J."/>
            <person name="Navarro P."/>
            <person name="Collado C."/>
            <person name="Perez-Perez A."/>
            <person name="Ottenwaelder B."/>
            <person name="Duchemin D."/>
            <person name="Cooke R."/>
            <person name="Laudie M."/>
            <person name="Berger-Llauro C."/>
            <person name="Purnelle B."/>
            <person name="Masuy D."/>
            <person name="de Haan M."/>
            <person name="Maarse A.C."/>
            <person name="Alcaraz J.-P."/>
            <person name="Cottet A."/>
            <person name="Casacuberta E."/>
            <person name="Monfort A."/>
            <person name="Argiriou A."/>
            <person name="Flores M."/>
            <person name="Liguori R."/>
            <person name="Vitale D."/>
            <person name="Mannhaupt G."/>
            <person name="Haase D."/>
            <person name="Schoof H."/>
            <person name="Rudd S."/>
            <person name="Zaccaria P."/>
            <person name="Mewes H.-W."/>
            <person name="Mayer K.F.X."/>
            <person name="Kaul S."/>
            <person name="Town C.D."/>
            <person name="Koo H.L."/>
            <person name="Tallon L.J."/>
            <person name="Jenkins J."/>
            <person name="Rooney T."/>
            <person name="Rizzo M."/>
            <person name="Walts A."/>
            <person name="Utterback T."/>
            <person name="Fujii C.Y."/>
            <person name="Shea T.P."/>
            <person name="Creasy T.H."/>
            <person name="Haas B."/>
            <person name="Maiti R."/>
            <person name="Wu D."/>
            <person name="Peterson J."/>
            <person name="Van Aken S."/>
            <person name="Pai G."/>
            <person name="Militscher J."/>
            <person name="Sellers P."/>
            <person name="Gill J.E."/>
            <person name="Feldblyum T.V."/>
            <person name="Preuss D."/>
            <person name="Lin X."/>
            <person name="Nierman W.C."/>
            <person name="Salzberg S.L."/>
            <person name="White O."/>
            <person name="Venter J.C."/>
            <person name="Fraser C.M."/>
            <person name="Kaneko T."/>
            <person name="Nakamura Y."/>
            <person name="Sato S."/>
            <person name="Kato T."/>
            <person name="Asamizu E."/>
            <person name="Sasamoto S."/>
            <person name="Kimura T."/>
            <person name="Idesawa K."/>
            <person name="Kawashima K."/>
            <person name="Kishida Y."/>
            <person name="Kiyokawa C."/>
            <person name="Kohara M."/>
            <person name="Matsumoto M."/>
            <person name="Matsuno A."/>
            <person name="Muraki A."/>
            <person name="Nakayama S."/>
            <person name="Nakazaki N."/>
            <person name="Shinpo S."/>
            <person name="Takeuchi C."/>
            <person name="Wada T."/>
            <person name="Watanabe A."/>
            <person name="Yamada M."/>
            <person name="Yasuda M."/>
            <person name="Tabata S."/>
        </authorList>
    </citation>
    <scope>NUCLEOTIDE SEQUENCE [LARGE SCALE GENOMIC DNA]</scope>
    <source>
        <strain>cv. Columbia</strain>
    </source>
</reference>
<reference key="3">
    <citation type="journal article" date="2017" name="Plant J.">
        <title>Araport11: a complete reannotation of the Arabidopsis thaliana reference genome.</title>
        <authorList>
            <person name="Cheng C.Y."/>
            <person name="Krishnakumar V."/>
            <person name="Chan A.P."/>
            <person name="Thibaud-Nissen F."/>
            <person name="Schobel S."/>
            <person name="Town C.D."/>
        </authorList>
    </citation>
    <scope>GENOME REANNOTATION</scope>
    <source>
        <strain>cv. Columbia</strain>
    </source>
</reference>
<reference key="4">
    <citation type="journal article" date="2004" name="PLoS Biol.">
        <title>Genetic and functional diversification of small RNA pathways in plants.</title>
        <authorList>
            <person name="Xie Z."/>
            <person name="Johansen L.K."/>
            <person name="Gustafson A.M."/>
            <person name="Kasschau K.D."/>
            <person name="Lellis A.D."/>
            <person name="Zilberman D."/>
            <person name="Jacobsen S.E."/>
            <person name="Carrington J.C."/>
        </authorList>
    </citation>
    <scope>SUBCELLULAR LOCATION</scope>
</reference>
<reference key="5">
    <citation type="journal article" date="2005" name="Curr. Biol.">
        <title>Partially redundant functions of Arabidopsis DICER-like enzymes and a role for DCL4 in producing trans-acting siRNAs.</title>
        <authorList>
            <person name="Gasciolli V."/>
            <person name="Mallory A.C."/>
            <person name="Bartel D.P."/>
            <person name="Vaucheret H."/>
        </authorList>
    </citation>
    <scope>FUNCTION</scope>
</reference>
<reference key="6">
    <citation type="journal article" date="2005" name="Plant Mol. Biol.">
        <title>Specific interactions between Dicer-like proteins and HYL1/DRB-family dsRNA-binding proteins in Arabidopsis thaliana.</title>
        <authorList>
            <person name="Hiraguri A."/>
            <person name="Itoh R."/>
            <person name="Kondo N."/>
            <person name="Nomura Y."/>
            <person name="Aizawa D."/>
            <person name="Murai Y."/>
            <person name="Koiwa H."/>
            <person name="Seki M."/>
            <person name="Shinozaki K."/>
            <person name="Fukuhara T."/>
        </authorList>
    </citation>
    <scope>INTERACTION WITH DRB2 AND DRB5</scope>
</reference>
<reference key="7">
    <citation type="journal article" date="2006" name="Cell">
        <title>The Arabidopsis chromatin-modifying nuclear siRNA pathway involves a nucleolar RNA processing center.</title>
        <authorList>
            <person name="Pontes O."/>
            <person name="Li C.F."/>
            <person name="Nunes P.C."/>
            <person name="Haag J."/>
            <person name="Ream T."/>
            <person name="Vitins A."/>
            <person name="Jacobsen S.E."/>
            <person name="Pikaard C.S."/>
        </authorList>
    </citation>
    <scope>SUBCELLULAR LOCATION</scope>
</reference>
<reference key="8">
    <citation type="journal article" date="2006" name="EMBO J.">
        <title>An antagonistic function for Arabidopsis DCL2 in development and a new function for DCL4 in generating viral siRNAs.</title>
        <authorList>
            <person name="Bouche N."/>
            <person name="Lauressergues D."/>
            <person name="Gasciolli V."/>
            <person name="Vaucheret H."/>
        </authorList>
    </citation>
    <scope>FUNCTION</scope>
</reference>
<reference key="9">
    <citation type="journal article" date="2007" name="Genetics">
        <title>DICER-LIKE 1 and DICER-LIKE 3 redundantly act to promote flowering via repression of FLOWERING LOCUS C in Arabidopsis thaliana.</title>
        <authorList>
            <person name="Schmitz R.J."/>
            <person name="Hong L."/>
            <person name="Fitzpatrick K.E."/>
            <person name="Amasino R.M."/>
        </authorList>
    </citation>
    <scope>FUNCTION</scope>
</reference>
<reference key="10">
    <citation type="journal article" date="2007" name="Plant Cell">
        <title>Suppression of antiviral silencing by cucumber mosaic virus 2b protein in Arabidopsis is associated with drastically reduced accumulation of three classes of viral small interfering RNAs.</title>
        <authorList>
            <person name="Diaz-Pendon J.A."/>
            <person name="Li F."/>
            <person name="Li W.X."/>
            <person name="Ding S.W."/>
        </authorList>
    </citation>
    <scope>FUNCTION</scope>
</reference>
<reference key="11">
    <citation type="journal article" date="2008" name="J. Virol.">
        <title>Structural and genetic requirements for the biogenesis of tobacco rattle virus-derived small interfering RNAs.</title>
        <authorList>
            <person name="Donaire L."/>
            <person name="Barajas D."/>
            <person name="Martinez-Garcia B."/>
            <person name="Martinez-Priego L."/>
            <person name="Pagan I."/>
            <person name="Llave C."/>
        </authorList>
    </citation>
    <scope>FUNCTION</scope>
</reference>
<reference key="12">
    <citation type="journal article" date="2013" name="PLoS ONE">
        <title>Genome-wide comparative in silico analysis of the RNA helicase gene family in Zea mays and Glycine max: a comparison with Arabidopsis and Oryza sativa.</title>
        <authorList>
            <person name="Xu R."/>
            <person name="Zhang S."/>
            <person name="Huang J."/>
            <person name="Zheng C."/>
        </authorList>
    </citation>
    <scope>GENE FAMILY</scope>
</reference>
<name>DCL3_ARATH</name>